<protein>
    <recommendedName>
        <fullName>GTP-binding protein REM 1</fullName>
    </recommendedName>
    <alternativeName>
        <fullName>GTPase-regulating endothelial cell sprouting</fullName>
    </alternativeName>
    <alternativeName>
        <fullName>Rad and Gem-like GTP-binding protein 1</fullName>
    </alternativeName>
</protein>
<evidence type="ECO:0000250" key="1"/>
<evidence type="ECO:0000250" key="2">
    <source>
        <dbReference type="UniProtKB" id="O35929"/>
    </source>
</evidence>
<evidence type="ECO:0000256" key="3">
    <source>
        <dbReference type="SAM" id="MobiDB-lite"/>
    </source>
</evidence>
<evidence type="ECO:0000269" key="4">
    <source>
    </source>
</evidence>
<evidence type="ECO:0000269" key="5">
    <source>
    </source>
</evidence>
<evidence type="ECO:0000269" key="6">
    <source ref="3"/>
</evidence>
<evidence type="ECO:0000305" key="7"/>
<evidence type="ECO:0007829" key="8">
    <source>
        <dbReference type="PDB" id="2NZJ"/>
    </source>
</evidence>
<organism>
    <name type="scientific">Homo sapiens</name>
    <name type="common">Human</name>
    <dbReference type="NCBI Taxonomy" id="9606"/>
    <lineage>
        <taxon>Eukaryota</taxon>
        <taxon>Metazoa</taxon>
        <taxon>Chordata</taxon>
        <taxon>Craniata</taxon>
        <taxon>Vertebrata</taxon>
        <taxon>Euteleostomi</taxon>
        <taxon>Mammalia</taxon>
        <taxon>Eutheria</taxon>
        <taxon>Euarchontoglires</taxon>
        <taxon>Primates</taxon>
        <taxon>Haplorrhini</taxon>
        <taxon>Catarrhini</taxon>
        <taxon>Hominidae</taxon>
        <taxon>Homo</taxon>
    </lineage>
</organism>
<reference key="1">
    <citation type="submission" date="1998-08" db="EMBL/GenBank/DDBJ databases">
        <title>Cloning of the human Rem gene.</title>
        <authorList>
            <person name="Finlin B.S."/>
            <person name="Andres D.A."/>
        </authorList>
    </citation>
    <scope>NUCLEOTIDE SEQUENCE [MRNA]</scope>
</reference>
<reference key="2">
    <citation type="journal article" date="2000" name="J. Cell Biol.">
        <title>Ges, a human GTPase of the Rad/Gem/Kir family, promotes endothelial cell sprouting and cytoskeleton reorganization.</title>
        <authorList>
            <person name="Pan J.Y."/>
            <person name="Fieles W.E."/>
            <person name="White A.M."/>
            <person name="Egerton M.M."/>
            <person name="Silberstein D.S."/>
        </authorList>
    </citation>
    <scope>NUCLEOTIDE SEQUENCE [MRNA]</scope>
    <scope>MUTAGENESIS OF THR-94</scope>
    <source>
        <tissue>Lymph node</tissue>
    </source>
</reference>
<reference key="3">
    <citation type="submission" date="2004-10" db="EMBL/GenBank/DDBJ databases">
        <title>Cloning of human full-length CDSs in BD Creator(TM) system donor vector.</title>
        <authorList>
            <person name="Kalnine N."/>
            <person name="Chen X."/>
            <person name="Rolfs A."/>
            <person name="Halleck A."/>
            <person name="Hines L."/>
            <person name="Eisenstein S."/>
            <person name="Koundinya M."/>
            <person name="Raphael J."/>
            <person name="Moreira D."/>
            <person name="Kelley T."/>
            <person name="LaBaer J."/>
            <person name="Lin Y."/>
            <person name="Phelan M."/>
            <person name="Farmer A."/>
        </authorList>
    </citation>
    <scope>NUCLEOTIDE SEQUENCE [LARGE SCALE MRNA]</scope>
    <scope>VARIANT ARG-28</scope>
</reference>
<reference key="4">
    <citation type="journal article" date="2004" name="Nat. Genet.">
        <title>Complete sequencing and characterization of 21,243 full-length human cDNAs.</title>
        <authorList>
            <person name="Ota T."/>
            <person name="Suzuki Y."/>
            <person name="Nishikawa T."/>
            <person name="Otsuki T."/>
            <person name="Sugiyama T."/>
            <person name="Irie R."/>
            <person name="Wakamatsu A."/>
            <person name="Hayashi K."/>
            <person name="Sato H."/>
            <person name="Nagai K."/>
            <person name="Kimura K."/>
            <person name="Makita H."/>
            <person name="Sekine M."/>
            <person name="Obayashi M."/>
            <person name="Nishi T."/>
            <person name="Shibahara T."/>
            <person name="Tanaka T."/>
            <person name="Ishii S."/>
            <person name="Yamamoto J."/>
            <person name="Saito K."/>
            <person name="Kawai Y."/>
            <person name="Isono Y."/>
            <person name="Nakamura Y."/>
            <person name="Nagahari K."/>
            <person name="Murakami K."/>
            <person name="Yasuda T."/>
            <person name="Iwayanagi T."/>
            <person name="Wagatsuma M."/>
            <person name="Shiratori A."/>
            <person name="Sudo H."/>
            <person name="Hosoiri T."/>
            <person name="Kaku Y."/>
            <person name="Kodaira H."/>
            <person name="Kondo H."/>
            <person name="Sugawara M."/>
            <person name="Takahashi M."/>
            <person name="Kanda K."/>
            <person name="Yokoi T."/>
            <person name="Furuya T."/>
            <person name="Kikkawa E."/>
            <person name="Omura Y."/>
            <person name="Abe K."/>
            <person name="Kamihara K."/>
            <person name="Katsuta N."/>
            <person name="Sato K."/>
            <person name="Tanikawa M."/>
            <person name="Yamazaki M."/>
            <person name="Ninomiya K."/>
            <person name="Ishibashi T."/>
            <person name="Yamashita H."/>
            <person name="Murakawa K."/>
            <person name="Fujimori K."/>
            <person name="Tanai H."/>
            <person name="Kimata M."/>
            <person name="Watanabe M."/>
            <person name="Hiraoka S."/>
            <person name="Chiba Y."/>
            <person name="Ishida S."/>
            <person name="Ono Y."/>
            <person name="Takiguchi S."/>
            <person name="Watanabe S."/>
            <person name="Yosida M."/>
            <person name="Hotuta T."/>
            <person name="Kusano J."/>
            <person name="Kanehori K."/>
            <person name="Takahashi-Fujii A."/>
            <person name="Hara H."/>
            <person name="Tanase T.-O."/>
            <person name="Nomura Y."/>
            <person name="Togiya S."/>
            <person name="Komai F."/>
            <person name="Hara R."/>
            <person name="Takeuchi K."/>
            <person name="Arita M."/>
            <person name="Imose N."/>
            <person name="Musashino K."/>
            <person name="Yuuki H."/>
            <person name="Oshima A."/>
            <person name="Sasaki N."/>
            <person name="Aotsuka S."/>
            <person name="Yoshikawa Y."/>
            <person name="Matsunawa H."/>
            <person name="Ichihara T."/>
            <person name="Shiohata N."/>
            <person name="Sano S."/>
            <person name="Moriya S."/>
            <person name="Momiyama H."/>
            <person name="Satoh N."/>
            <person name="Takami S."/>
            <person name="Terashima Y."/>
            <person name="Suzuki O."/>
            <person name="Nakagawa S."/>
            <person name="Senoh A."/>
            <person name="Mizoguchi H."/>
            <person name="Goto Y."/>
            <person name="Shimizu F."/>
            <person name="Wakebe H."/>
            <person name="Hishigaki H."/>
            <person name="Watanabe T."/>
            <person name="Sugiyama A."/>
            <person name="Takemoto M."/>
            <person name="Kawakami B."/>
            <person name="Yamazaki M."/>
            <person name="Watanabe K."/>
            <person name="Kumagai A."/>
            <person name="Itakura S."/>
            <person name="Fukuzumi Y."/>
            <person name="Fujimori Y."/>
            <person name="Komiyama M."/>
            <person name="Tashiro H."/>
            <person name="Tanigami A."/>
            <person name="Fujiwara T."/>
            <person name="Ono T."/>
            <person name="Yamada K."/>
            <person name="Fujii Y."/>
            <person name="Ozaki K."/>
            <person name="Hirao M."/>
            <person name="Ohmori Y."/>
            <person name="Kawabata A."/>
            <person name="Hikiji T."/>
            <person name="Kobatake N."/>
            <person name="Inagaki H."/>
            <person name="Ikema Y."/>
            <person name="Okamoto S."/>
            <person name="Okitani R."/>
            <person name="Kawakami T."/>
            <person name="Noguchi S."/>
            <person name="Itoh T."/>
            <person name="Shigeta K."/>
            <person name="Senba T."/>
            <person name="Matsumura K."/>
            <person name="Nakajima Y."/>
            <person name="Mizuno T."/>
            <person name="Morinaga M."/>
            <person name="Sasaki M."/>
            <person name="Togashi T."/>
            <person name="Oyama M."/>
            <person name="Hata H."/>
            <person name="Watanabe M."/>
            <person name="Komatsu T."/>
            <person name="Mizushima-Sugano J."/>
            <person name="Satoh T."/>
            <person name="Shirai Y."/>
            <person name="Takahashi Y."/>
            <person name="Nakagawa K."/>
            <person name="Okumura K."/>
            <person name="Nagase T."/>
            <person name="Nomura N."/>
            <person name="Kikuchi H."/>
            <person name="Masuho Y."/>
            <person name="Yamashita R."/>
            <person name="Nakai K."/>
            <person name="Yada T."/>
            <person name="Nakamura Y."/>
            <person name="Ohara O."/>
            <person name="Isogai T."/>
            <person name="Sugano S."/>
        </authorList>
    </citation>
    <scope>NUCLEOTIDE SEQUENCE [LARGE SCALE MRNA]</scope>
    <scope>VARIANT ARG-28</scope>
    <source>
        <tissue>Caudate nucleus</tissue>
    </source>
</reference>
<reference key="5">
    <citation type="journal article" date="2001" name="Nature">
        <title>The DNA sequence and comparative analysis of human chromosome 20.</title>
        <authorList>
            <person name="Deloukas P."/>
            <person name="Matthews L.H."/>
            <person name="Ashurst J.L."/>
            <person name="Burton J."/>
            <person name="Gilbert J.G.R."/>
            <person name="Jones M."/>
            <person name="Stavrides G."/>
            <person name="Almeida J.P."/>
            <person name="Babbage A.K."/>
            <person name="Bagguley C.L."/>
            <person name="Bailey J."/>
            <person name="Barlow K.F."/>
            <person name="Bates K.N."/>
            <person name="Beard L.M."/>
            <person name="Beare D.M."/>
            <person name="Beasley O.P."/>
            <person name="Bird C.P."/>
            <person name="Blakey S.E."/>
            <person name="Bridgeman A.M."/>
            <person name="Brown A.J."/>
            <person name="Buck D."/>
            <person name="Burrill W.D."/>
            <person name="Butler A.P."/>
            <person name="Carder C."/>
            <person name="Carter N.P."/>
            <person name="Chapman J.C."/>
            <person name="Clamp M."/>
            <person name="Clark G."/>
            <person name="Clark L.N."/>
            <person name="Clark S.Y."/>
            <person name="Clee C.M."/>
            <person name="Clegg S."/>
            <person name="Cobley V.E."/>
            <person name="Collier R.E."/>
            <person name="Connor R.E."/>
            <person name="Corby N.R."/>
            <person name="Coulson A."/>
            <person name="Coville G.J."/>
            <person name="Deadman R."/>
            <person name="Dhami P.D."/>
            <person name="Dunn M."/>
            <person name="Ellington A.G."/>
            <person name="Frankland J.A."/>
            <person name="Fraser A."/>
            <person name="French L."/>
            <person name="Garner P."/>
            <person name="Grafham D.V."/>
            <person name="Griffiths C."/>
            <person name="Griffiths M.N.D."/>
            <person name="Gwilliam R."/>
            <person name="Hall R.E."/>
            <person name="Hammond S."/>
            <person name="Harley J.L."/>
            <person name="Heath P.D."/>
            <person name="Ho S."/>
            <person name="Holden J.L."/>
            <person name="Howden P.J."/>
            <person name="Huckle E."/>
            <person name="Hunt A.R."/>
            <person name="Hunt S.E."/>
            <person name="Jekosch K."/>
            <person name="Johnson C.M."/>
            <person name="Johnson D."/>
            <person name="Kay M.P."/>
            <person name="Kimberley A.M."/>
            <person name="King A."/>
            <person name="Knights A."/>
            <person name="Laird G.K."/>
            <person name="Lawlor S."/>
            <person name="Lehvaeslaiho M.H."/>
            <person name="Leversha M.A."/>
            <person name="Lloyd C."/>
            <person name="Lloyd D.M."/>
            <person name="Lovell J.D."/>
            <person name="Marsh V.L."/>
            <person name="Martin S.L."/>
            <person name="McConnachie L.J."/>
            <person name="McLay K."/>
            <person name="McMurray A.A."/>
            <person name="Milne S.A."/>
            <person name="Mistry D."/>
            <person name="Moore M.J.F."/>
            <person name="Mullikin J.C."/>
            <person name="Nickerson T."/>
            <person name="Oliver K."/>
            <person name="Parker A."/>
            <person name="Patel R."/>
            <person name="Pearce T.A.V."/>
            <person name="Peck A.I."/>
            <person name="Phillimore B.J.C.T."/>
            <person name="Prathalingam S.R."/>
            <person name="Plumb R.W."/>
            <person name="Ramsay H."/>
            <person name="Rice C.M."/>
            <person name="Ross M.T."/>
            <person name="Scott C.E."/>
            <person name="Sehra H.K."/>
            <person name="Shownkeen R."/>
            <person name="Sims S."/>
            <person name="Skuce C.D."/>
            <person name="Smith M.L."/>
            <person name="Soderlund C."/>
            <person name="Steward C.A."/>
            <person name="Sulston J.E."/>
            <person name="Swann R.M."/>
            <person name="Sycamore N."/>
            <person name="Taylor R."/>
            <person name="Tee L."/>
            <person name="Thomas D.W."/>
            <person name="Thorpe A."/>
            <person name="Tracey A."/>
            <person name="Tromans A.C."/>
            <person name="Vaudin M."/>
            <person name="Wall M."/>
            <person name="Wallis J.M."/>
            <person name="Whitehead S.L."/>
            <person name="Whittaker P."/>
            <person name="Willey D.L."/>
            <person name="Williams L."/>
            <person name="Williams S.A."/>
            <person name="Wilming L."/>
            <person name="Wray P.W."/>
            <person name="Hubbard T."/>
            <person name="Durbin R.M."/>
            <person name="Bentley D.R."/>
            <person name="Beck S."/>
            <person name="Rogers J."/>
        </authorList>
    </citation>
    <scope>NUCLEOTIDE SEQUENCE [LARGE SCALE GENOMIC DNA]</scope>
</reference>
<reference key="6">
    <citation type="submission" date="2005-09" db="EMBL/GenBank/DDBJ databases">
        <authorList>
            <person name="Mural R.J."/>
            <person name="Istrail S."/>
            <person name="Sutton G.G."/>
            <person name="Florea L."/>
            <person name="Halpern A.L."/>
            <person name="Mobarry C.M."/>
            <person name="Lippert R."/>
            <person name="Walenz B."/>
            <person name="Shatkay H."/>
            <person name="Dew I."/>
            <person name="Miller J.R."/>
            <person name="Flanigan M.J."/>
            <person name="Edwards N.J."/>
            <person name="Bolanos R."/>
            <person name="Fasulo D."/>
            <person name="Halldorsson B.V."/>
            <person name="Hannenhalli S."/>
            <person name="Turner R."/>
            <person name="Yooseph S."/>
            <person name="Lu F."/>
            <person name="Nusskern D.R."/>
            <person name="Shue B.C."/>
            <person name="Zheng X.H."/>
            <person name="Zhong F."/>
            <person name="Delcher A.L."/>
            <person name="Huson D.H."/>
            <person name="Kravitz S.A."/>
            <person name="Mouchard L."/>
            <person name="Reinert K."/>
            <person name="Remington K.A."/>
            <person name="Clark A.G."/>
            <person name="Waterman M.S."/>
            <person name="Eichler E.E."/>
            <person name="Adams M.D."/>
            <person name="Hunkapiller M.W."/>
            <person name="Myers E.W."/>
            <person name="Venter J.C."/>
        </authorList>
    </citation>
    <scope>NUCLEOTIDE SEQUENCE [LARGE SCALE GENOMIC DNA]</scope>
</reference>
<reference key="7">
    <citation type="journal article" date="2004" name="Genome Res.">
        <title>The status, quality, and expansion of the NIH full-length cDNA project: the Mammalian Gene Collection (MGC).</title>
        <authorList>
            <consortium name="The MGC Project Team"/>
        </authorList>
    </citation>
    <scope>NUCLEOTIDE SEQUENCE [LARGE SCALE MRNA]</scope>
</reference>
<dbReference type="EMBL" id="AF084465">
    <property type="protein sequence ID" value="AAC33132.1"/>
    <property type="molecule type" value="mRNA"/>
</dbReference>
<dbReference type="EMBL" id="AF152863">
    <property type="protein sequence ID" value="AAF74212.1"/>
    <property type="molecule type" value="mRNA"/>
</dbReference>
<dbReference type="EMBL" id="BT020078">
    <property type="protein sequence ID" value="AAV38881.1"/>
    <property type="molecule type" value="mRNA"/>
</dbReference>
<dbReference type="EMBL" id="BT020079">
    <property type="protein sequence ID" value="AAV38882.1"/>
    <property type="molecule type" value="mRNA"/>
</dbReference>
<dbReference type="EMBL" id="AK313060">
    <property type="protein sequence ID" value="BAG35890.1"/>
    <property type="molecule type" value="mRNA"/>
</dbReference>
<dbReference type="EMBL" id="AL121751">
    <property type="status" value="NOT_ANNOTATED_CDS"/>
    <property type="molecule type" value="Genomic_DNA"/>
</dbReference>
<dbReference type="EMBL" id="CH471077">
    <property type="protein sequence ID" value="EAW76439.1"/>
    <property type="molecule type" value="Genomic_DNA"/>
</dbReference>
<dbReference type="EMBL" id="CH471077">
    <property type="protein sequence ID" value="EAW76440.1"/>
    <property type="molecule type" value="Genomic_DNA"/>
</dbReference>
<dbReference type="EMBL" id="CH471077">
    <property type="protein sequence ID" value="EAW76442.1"/>
    <property type="molecule type" value="Genomic_DNA"/>
</dbReference>
<dbReference type="EMBL" id="BC039813">
    <property type="protein sequence ID" value="AAH39813.1"/>
    <property type="molecule type" value="mRNA"/>
</dbReference>
<dbReference type="CCDS" id="CCDS13181.1"/>
<dbReference type="RefSeq" id="NP_054731.2">
    <property type="nucleotide sequence ID" value="NM_014012.5"/>
</dbReference>
<dbReference type="PDB" id="2NZJ">
    <property type="method" value="X-ray"/>
    <property type="resolution" value="2.50 A"/>
    <property type="chains" value="A/B/C/D=79-251"/>
</dbReference>
<dbReference type="PDBsum" id="2NZJ"/>
<dbReference type="SMR" id="O75628"/>
<dbReference type="BioGRID" id="118781">
    <property type="interactions" value="8"/>
</dbReference>
<dbReference type="FunCoup" id="O75628">
    <property type="interactions" value="667"/>
</dbReference>
<dbReference type="STRING" id="9606.ENSP00000201979"/>
<dbReference type="GlyGen" id="O75628">
    <property type="glycosylation" value="2 sites, 1 O-linked glycan (2 sites)"/>
</dbReference>
<dbReference type="iPTMnet" id="O75628"/>
<dbReference type="PhosphoSitePlus" id="O75628"/>
<dbReference type="BioMuta" id="REM1"/>
<dbReference type="jPOST" id="O75628"/>
<dbReference type="MassIVE" id="O75628"/>
<dbReference type="PaxDb" id="9606-ENSP00000201979"/>
<dbReference type="PeptideAtlas" id="O75628"/>
<dbReference type="ProteomicsDB" id="50127"/>
<dbReference type="Antibodypedia" id="10156">
    <property type="antibodies" value="105 antibodies from 26 providers"/>
</dbReference>
<dbReference type="DNASU" id="28954"/>
<dbReference type="Ensembl" id="ENST00000201979.3">
    <property type="protein sequence ID" value="ENSP00000201979.2"/>
    <property type="gene ID" value="ENSG00000088320.4"/>
</dbReference>
<dbReference type="GeneID" id="28954"/>
<dbReference type="KEGG" id="hsa:28954"/>
<dbReference type="MANE-Select" id="ENST00000201979.3">
    <property type="protein sequence ID" value="ENSP00000201979.2"/>
    <property type="RefSeq nucleotide sequence ID" value="NM_014012.6"/>
    <property type="RefSeq protein sequence ID" value="NP_054731.2"/>
</dbReference>
<dbReference type="UCSC" id="uc002wwa.5">
    <property type="organism name" value="human"/>
</dbReference>
<dbReference type="AGR" id="HGNC:15922"/>
<dbReference type="CTD" id="28954"/>
<dbReference type="DisGeNET" id="28954"/>
<dbReference type="GeneCards" id="REM1"/>
<dbReference type="HGNC" id="HGNC:15922">
    <property type="gene designation" value="REM1"/>
</dbReference>
<dbReference type="HPA" id="ENSG00000088320">
    <property type="expression patterns" value="Tissue enhanced (cervix)"/>
</dbReference>
<dbReference type="MalaCards" id="REM1"/>
<dbReference type="MIM" id="610388">
    <property type="type" value="gene"/>
</dbReference>
<dbReference type="neXtProt" id="NX_O75628"/>
<dbReference type="OpenTargets" id="ENSG00000088320"/>
<dbReference type="PharmGKB" id="PA34324"/>
<dbReference type="VEuPathDB" id="HostDB:ENSG00000088320"/>
<dbReference type="eggNOG" id="KOG0395">
    <property type="taxonomic scope" value="Eukaryota"/>
</dbReference>
<dbReference type="GeneTree" id="ENSGT00940000160613"/>
<dbReference type="HOGENOM" id="CLU_041217_3_2_1"/>
<dbReference type="InParanoid" id="O75628"/>
<dbReference type="OMA" id="DENSWHR"/>
<dbReference type="OrthoDB" id="5239715at2759"/>
<dbReference type="PAN-GO" id="O75628">
    <property type="GO annotations" value="3 GO annotations based on evolutionary models"/>
</dbReference>
<dbReference type="PhylomeDB" id="O75628"/>
<dbReference type="TreeFam" id="TF314379"/>
<dbReference type="PathwayCommons" id="O75628"/>
<dbReference type="SignaLink" id="O75628"/>
<dbReference type="SIGNOR" id="O75628"/>
<dbReference type="BioGRID-ORCS" id="28954">
    <property type="hits" value="22 hits in 1146 CRISPR screens"/>
</dbReference>
<dbReference type="EvolutionaryTrace" id="O75628"/>
<dbReference type="GenomeRNAi" id="28954"/>
<dbReference type="Pharos" id="O75628">
    <property type="development level" value="Tbio"/>
</dbReference>
<dbReference type="PRO" id="PR:O75628"/>
<dbReference type="Proteomes" id="UP000005640">
    <property type="component" value="Chromosome 20"/>
</dbReference>
<dbReference type="RNAct" id="O75628">
    <property type="molecule type" value="protein"/>
</dbReference>
<dbReference type="Bgee" id="ENSG00000088320">
    <property type="expression patterns" value="Expressed in endocervix and 154 other cell types or tissues"/>
</dbReference>
<dbReference type="GO" id="GO:0031674">
    <property type="term" value="C:I band"/>
    <property type="evidence" value="ECO:0007669"/>
    <property type="project" value="Ensembl"/>
</dbReference>
<dbReference type="GO" id="GO:0005886">
    <property type="term" value="C:plasma membrane"/>
    <property type="evidence" value="ECO:0000318"/>
    <property type="project" value="GO_Central"/>
</dbReference>
<dbReference type="GO" id="GO:0030315">
    <property type="term" value="C:T-tubule"/>
    <property type="evidence" value="ECO:0007669"/>
    <property type="project" value="Ensembl"/>
</dbReference>
<dbReference type="GO" id="GO:0005246">
    <property type="term" value="F:calcium channel regulator activity"/>
    <property type="evidence" value="ECO:0000318"/>
    <property type="project" value="GO_Central"/>
</dbReference>
<dbReference type="GO" id="GO:0005516">
    <property type="term" value="F:calmodulin binding"/>
    <property type="evidence" value="ECO:0007669"/>
    <property type="project" value="UniProtKB-KW"/>
</dbReference>
<dbReference type="GO" id="GO:0005525">
    <property type="term" value="F:GTP binding"/>
    <property type="evidence" value="ECO:0000318"/>
    <property type="project" value="GO_Central"/>
</dbReference>
<dbReference type="GO" id="GO:0003924">
    <property type="term" value="F:GTPase activity"/>
    <property type="evidence" value="ECO:0007669"/>
    <property type="project" value="InterPro"/>
</dbReference>
<dbReference type="GO" id="GO:0044325">
    <property type="term" value="F:transmembrane transporter binding"/>
    <property type="evidence" value="ECO:0007669"/>
    <property type="project" value="Ensembl"/>
</dbReference>
<dbReference type="GO" id="GO:1904878">
    <property type="term" value="P:negative regulation of calcium ion transmembrane transport via high voltage-gated calcium channel"/>
    <property type="evidence" value="ECO:0007669"/>
    <property type="project" value="Ensembl"/>
</dbReference>
<dbReference type="GO" id="GO:0014722">
    <property type="term" value="P:regulation of skeletal muscle contraction by calcium ion signaling"/>
    <property type="evidence" value="ECO:0007669"/>
    <property type="project" value="Ensembl"/>
</dbReference>
<dbReference type="CDD" id="cd04148">
    <property type="entry name" value="RGK"/>
    <property type="match status" value="1"/>
</dbReference>
<dbReference type="FunFam" id="3.40.50.300:FF:000311">
    <property type="entry name" value="GTP-binding protein RAD"/>
    <property type="match status" value="1"/>
</dbReference>
<dbReference type="Gene3D" id="3.40.50.300">
    <property type="entry name" value="P-loop containing nucleotide triphosphate hydrolases"/>
    <property type="match status" value="1"/>
</dbReference>
<dbReference type="InterPro" id="IPR027417">
    <property type="entry name" value="P-loop_NTPase"/>
</dbReference>
<dbReference type="InterPro" id="IPR017358">
    <property type="entry name" value="RGK"/>
</dbReference>
<dbReference type="InterPro" id="IPR051641">
    <property type="entry name" value="RGK_GTP-binding_reg"/>
</dbReference>
<dbReference type="InterPro" id="IPR005225">
    <property type="entry name" value="Small_GTP-bd"/>
</dbReference>
<dbReference type="InterPro" id="IPR001806">
    <property type="entry name" value="Small_GTPase"/>
</dbReference>
<dbReference type="NCBIfam" id="TIGR00231">
    <property type="entry name" value="small_GTP"/>
    <property type="match status" value="1"/>
</dbReference>
<dbReference type="PANTHER" id="PTHR45775:SF2">
    <property type="entry name" value="GTP-BINDING PROTEIN REM 1"/>
    <property type="match status" value="1"/>
</dbReference>
<dbReference type="PANTHER" id="PTHR45775">
    <property type="entry name" value="RAD, GEM/KIR FAMILY MEMBER 2, ISOFORM C"/>
    <property type="match status" value="1"/>
</dbReference>
<dbReference type="Pfam" id="PF00071">
    <property type="entry name" value="Ras"/>
    <property type="match status" value="1"/>
</dbReference>
<dbReference type="PIRSF" id="PIRSF038017">
    <property type="entry name" value="GTP-binding_GEM"/>
    <property type="match status" value="1"/>
</dbReference>
<dbReference type="PRINTS" id="PR00449">
    <property type="entry name" value="RASTRNSFRMNG"/>
</dbReference>
<dbReference type="SMART" id="SM00175">
    <property type="entry name" value="RAB"/>
    <property type="match status" value="1"/>
</dbReference>
<dbReference type="SMART" id="SM00173">
    <property type="entry name" value="RAS"/>
    <property type="match status" value="1"/>
</dbReference>
<dbReference type="SMART" id="SM00174">
    <property type="entry name" value="RHO"/>
    <property type="match status" value="1"/>
</dbReference>
<dbReference type="SUPFAM" id="SSF52540">
    <property type="entry name" value="P-loop containing nucleoside triphosphate hydrolases"/>
    <property type="match status" value="1"/>
</dbReference>
<dbReference type="PROSITE" id="PS51421">
    <property type="entry name" value="RAS"/>
    <property type="match status" value="1"/>
</dbReference>
<name>REM1_HUMAN</name>
<sequence length="298" mass="32947">MTLNTEQEAKTPLHRRASTPLPLSPRGHQPGRLSTVPSTQSQHPRLGQSASLNPPTQKPSPAPDDWSSESSDSEGSWEALYRVVLLGDPGVGKTSLASLFAGKQERDLHEQLGEDVYERTLTVDGEDTTLVVVDTWEAEKLDKSWSQESCLQGGSAYVIVYSIADRGSFESASELRIQLRRTHQADHVPIILVGNKADLARCREVSVEEGRACAVVFDCKFIETSATLQHNVAELFEGVVRQLRLRRRDSAAKEPPAPRRPASLAQRARRFLARLTARSARRRALKARSKSCHNLAVL</sequence>
<proteinExistence type="evidence at protein level"/>
<comment type="function">
    <text>Promotes endothelial cell sprouting and actin cytoskeletal reorganization. May be involved in angiogenesis. May function in Ca(2+) signaling.</text>
</comment>
<comment type="subunit">
    <text>In vitro, interacts with calmodulin in a calcium-dependent manner.</text>
</comment>
<comment type="tissue specificity">
    <text>Most highly expressed in the endothelial lining of the blood vessels in uterus and heart. Lower levels found in spleen, lymph node, kidney and testis. Also found in cells with secretory function such as the islets of Langerhans, lobule/duct epithelium in the breast, bile duct epithelium in the liver, surface epithelium in the endometrial glands of the uterus, colon mucosa and acinar cells in the pancreas and the prostate.</text>
</comment>
<comment type="similarity">
    <text evidence="7">Belongs to the small GTPase superfamily. RGK family.</text>
</comment>
<gene>
    <name type="primary">REM1</name>
    <name type="synonym">GES</name>
    <name type="synonym">REM</name>
</gene>
<feature type="chain" id="PRO_0000122481" description="GTP-binding protein REM 1">
    <location>
        <begin position="1"/>
        <end position="298"/>
    </location>
</feature>
<feature type="region of interest" description="Disordered" evidence="3">
    <location>
        <begin position="1"/>
        <end position="73"/>
    </location>
</feature>
<feature type="region of interest" description="Calmodulin-binding" evidence="1">
    <location>
        <begin position="268"/>
        <end position="287"/>
    </location>
</feature>
<feature type="compositionally biased region" description="Polar residues" evidence="3">
    <location>
        <begin position="35"/>
        <end position="55"/>
    </location>
</feature>
<feature type="compositionally biased region" description="Low complexity" evidence="3">
    <location>
        <begin position="63"/>
        <end position="73"/>
    </location>
</feature>
<feature type="binding site" evidence="1">
    <location>
        <begin position="87"/>
        <end position="94"/>
    </location>
    <ligand>
        <name>GTP</name>
        <dbReference type="ChEBI" id="CHEBI:37565"/>
    </ligand>
</feature>
<feature type="binding site" evidence="1">
    <location>
        <begin position="195"/>
        <end position="198"/>
    </location>
    <ligand>
        <name>GTP</name>
        <dbReference type="ChEBI" id="CHEBI:37565"/>
    </ligand>
</feature>
<feature type="modified residue" description="Phosphoserine" evidence="2">
    <location>
        <position position="51"/>
    </location>
</feature>
<feature type="sequence variant" id="VAR_049498" description="In dbSNP:rs1006459." evidence="5 6">
    <original>H</original>
    <variation>R</variation>
    <location>
        <position position="28"/>
    </location>
</feature>
<feature type="sequence variant" id="VAR_061232" description="In dbSNP:rs59730832.">
    <original>R</original>
    <variation>W</variation>
    <location>
        <position position="45"/>
    </location>
</feature>
<feature type="sequence variant" id="VAR_049499" description="In dbSNP:rs2233829.">
    <original>P</original>
    <variation>A</variation>
    <location>
        <position position="59"/>
    </location>
</feature>
<feature type="mutagenesis site" description="No endothelial cell sprouting." evidence="4">
    <original>T</original>
    <variation>N</variation>
    <location>
        <position position="94"/>
    </location>
</feature>
<feature type="sequence conflict" description="In Ref. 1; AAC33132." evidence="7" ref="1">
    <original>E</original>
    <variation>V</variation>
    <location>
        <position position="209"/>
    </location>
</feature>
<feature type="strand" evidence="8">
    <location>
        <begin position="80"/>
        <end position="86"/>
    </location>
</feature>
<feature type="helix" evidence="8">
    <location>
        <begin position="93"/>
        <end position="101"/>
    </location>
</feature>
<feature type="strand" evidence="8">
    <location>
        <begin position="112"/>
        <end position="123"/>
    </location>
</feature>
<feature type="strand" evidence="8">
    <location>
        <begin position="126"/>
        <end position="133"/>
    </location>
</feature>
<feature type="helix" evidence="8">
    <location>
        <begin position="145"/>
        <end position="149"/>
    </location>
</feature>
<feature type="turn" evidence="8">
    <location>
        <begin position="150"/>
        <end position="152"/>
    </location>
</feature>
<feature type="strand" evidence="8">
    <location>
        <begin position="155"/>
        <end position="162"/>
    </location>
</feature>
<feature type="helix" evidence="8">
    <location>
        <begin position="166"/>
        <end position="181"/>
    </location>
</feature>
<feature type="strand" evidence="8">
    <location>
        <begin position="190"/>
        <end position="195"/>
    </location>
</feature>
<feature type="turn" evidence="8">
    <location>
        <begin position="200"/>
        <end position="202"/>
    </location>
</feature>
<feature type="helix" evidence="8">
    <location>
        <begin position="207"/>
        <end position="217"/>
    </location>
</feature>
<feature type="strand" evidence="8">
    <location>
        <begin position="219"/>
        <end position="223"/>
    </location>
</feature>
<feature type="turn" evidence="8">
    <location>
        <begin position="226"/>
        <end position="229"/>
    </location>
</feature>
<feature type="helix" evidence="8">
    <location>
        <begin position="232"/>
        <end position="247"/>
    </location>
</feature>
<keyword id="KW-0002">3D-structure</keyword>
<keyword id="KW-0112">Calmodulin-binding</keyword>
<keyword id="KW-0342">GTP-binding</keyword>
<keyword id="KW-0547">Nucleotide-binding</keyword>
<keyword id="KW-0597">Phosphoprotein</keyword>
<keyword id="KW-1267">Proteomics identification</keyword>
<keyword id="KW-1185">Reference proteome</keyword>
<accession>O75628</accession>
<accession>E1P5L1</accession>
<accession>Q5TZR7</accession>
<accession>Q5TZR8</accession>
<accession>Q9NP57</accession>